<organism>
    <name type="scientific">Chlamydomonas reinhardtii</name>
    <name type="common">Chlamydomonas smithii</name>
    <dbReference type="NCBI Taxonomy" id="3055"/>
    <lineage>
        <taxon>Eukaryota</taxon>
        <taxon>Viridiplantae</taxon>
        <taxon>Chlorophyta</taxon>
        <taxon>core chlorophytes</taxon>
        <taxon>Chlorophyceae</taxon>
        <taxon>CS clade</taxon>
        <taxon>Chlamydomonadales</taxon>
        <taxon>Chlamydomonadaceae</taxon>
        <taxon>Chlamydomonas</taxon>
    </lineage>
</organism>
<comment type="function">
    <text evidence="1 2 4">One of the components of the core complex of photosystem II (PSII). PSII is a light-driven water:plastoquinone oxidoreductase that uses light energy to abstract electrons from H(2)O, generating O(2) and a proton gradient subsequently used for ATP formation. It consists of a core antenna complex that captures photons, and an electron transfer chain that converts photonic excitation into a charge separation. Required for assembly and/or stability of PSII (PubMed:12939265, PubMed:8193302).</text>
</comment>
<comment type="subunit">
    <text evidence="1 2 3">PSII is composed of 1 copy each of membrane proteins PsbA, PsbB, PsbC, PsbD, PsbE, PsbF, PsbH, PsbI, PsbJ, PsbK, PsbL, PsbM, PsbT, PsbX, PsbY, PsbZ, Psb30/Ycf12, at least 3 peripheral proteins of the oxygen-evolving complex and a large number of cofactors. It forms dimeric complexes. This protein is tightly associated with CP43 (psbC), one of the core proteins (PubMed:12939265).</text>
</comment>
<comment type="subcellular location">
    <subcellularLocation>
        <location evidence="1 2 3">Plastid</location>
        <location evidence="1 2 3">Chloroplast thylakoid membrane</location>
        <topology evidence="1 5">Single-pass membrane protein</topology>
    </subcellularLocation>
</comment>
<comment type="disruption phenotype">
    <text evidence="4">Not able to grow photoautotrophically, grows normally heterotrophically. Accumulates less than 10% PSII, although the subunits are synthesized normally.</text>
</comment>
<comment type="similarity">
    <text evidence="1">Belongs to the PsbK family.</text>
</comment>
<sequence length="46" mass="5060">MTTLALVLAKLPEAYAPFAPIVDVLPVIPVFFILLAFVWQAAVSFR</sequence>
<dbReference type="EMBL" id="X53413">
    <property type="protein sequence ID" value="CAA37492.1"/>
    <property type="molecule type" value="Genomic_DNA"/>
</dbReference>
<dbReference type="EMBL" id="AF541861">
    <property type="protein sequence ID" value="AAN17817.1"/>
    <property type="molecule type" value="Genomic_DNA"/>
</dbReference>
<dbReference type="EMBL" id="FJ423446">
    <property type="protein sequence ID" value="ACJ50094.1"/>
    <property type="molecule type" value="Genomic_DNA"/>
</dbReference>
<dbReference type="EMBL" id="BK000554">
    <property type="protein sequence ID" value="DAA00907.1"/>
    <property type="molecule type" value="Genomic_DNA"/>
</dbReference>
<dbReference type="PIR" id="S11162">
    <property type="entry name" value="S11162"/>
</dbReference>
<dbReference type="RefSeq" id="NP_958361.1">
    <property type="nucleotide sequence ID" value="NC_005353.1"/>
</dbReference>
<dbReference type="PDB" id="6KAC">
    <property type="method" value="EM"/>
    <property type="resolution" value="2.70 A"/>
    <property type="chains" value="K/k=1-46"/>
</dbReference>
<dbReference type="PDB" id="6KAD">
    <property type="method" value="EM"/>
    <property type="resolution" value="3.40 A"/>
    <property type="chains" value="K/k=1-46"/>
</dbReference>
<dbReference type="PDB" id="6KAF">
    <property type="method" value="EM"/>
    <property type="resolution" value="3.73 A"/>
    <property type="chains" value="K/k=1-46"/>
</dbReference>
<dbReference type="PDB" id="8KDE">
    <property type="method" value="EM"/>
    <property type="resolution" value="2.60 A"/>
    <property type="chains" value="K=1-46"/>
</dbReference>
<dbReference type="PDB" id="8R2I">
    <property type="method" value="EM"/>
    <property type="resolution" value="2.90 A"/>
    <property type="chains" value="K=10-46"/>
</dbReference>
<dbReference type="PDB" id="8ZEE">
    <property type="method" value="EM"/>
    <property type="resolution" value="2.90 A"/>
    <property type="chains" value="K=1-46"/>
</dbReference>
<dbReference type="PDBsum" id="6KAC"/>
<dbReference type="PDBsum" id="6KAD"/>
<dbReference type="PDBsum" id="6KAF"/>
<dbReference type="PDBsum" id="8KDE"/>
<dbReference type="PDBsum" id="8R2I"/>
<dbReference type="PDBsum" id="8ZEE"/>
<dbReference type="EMDB" id="EMD-18848"/>
<dbReference type="EMDB" id="EMD-37133"/>
<dbReference type="EMDB" id="EMD-60026"/>
<dbReference type="EMDB" id="EMD-9955"/>
<dbReference type="EMDB" id="EMD-9956"/>
<dbReference type="EMDB" id="EMD-9957"/>
<dbReference type="SMR" id="P18263"/>
<dbReference type="FunCoup" id="P18263">
    <property type="interactions" value="41"/>
</dbReference>
<dbReference type="STRING" id="3055.P18263"/>
<dbReference type="PaxDb" id="3055-DAA00907"/>
<dbReference type="GeneID" id="2716978"/>
<dbReference type="KEGG" id="cre:ChreCp004"/>
<dbReference type="eggNOG" id="ENOG502SDX2">
    <property type="taxonomic scope" value="Eukaryota"/>
</dbReference>
<dbReference type="HOGENOM" id="CLU_174355_0_0_1"/>
<dbReference type="InParanoid" id="P18263"/>
<dbReference type="BioCyc" id="CHLAMY:CHRECP004-MONOMER"/>
<dbReference type="BioCyc" id="MetaCyc:CHRECP004-MONOMER"/>
<dbReference type="Proteomes" id="UP000006906">
    <property type="component" value="Chloroplast"/>
</dbReference>
<dbReference type="GO" id="GO:0009535">
    <property type="term" value="C:chloroplast thylakoid membrane"/>
    <property type="evidence" value="ECO:0007669"/>
    <property type="project" value="UniProtKB-SubCell"/>
</dbReference>
<dbReference type="GO" id="GO:0009539">
    <property type="term" value="C:photosystem II reaction center"/>
    <property type="evidence" value="ECO:0007669"/>
    <property type="project" value="InterPro"/>
</dbReference>
<dbReference type="GO" id="GO:0015979">
    <property type="term" value="P:photosynthesis"/>
    <property type="evidence" value="ECO:0007669"/>
    <property type="project" value="UniProtKB-UniRule"/>
</dbReference>
<dbReference type="HAMAP" id="MF_00441">
    <property type="entry name" value="PSII_PsbK"/>
    <property type="match status" value="1"/>
</dbReference>
<dbReference type="InterPro" id="IPR003687">
    <property type="entry name" value="PSII_PsbK"/>
</dbReference>
<dbReference type="InterPro" id="IPR037270">
    <property type="entry name" value="PSII_PsbK_sf"/>
</dbReference>
<dbReference type="NCBIfam" id="NF002715">
    <property type="entry name" value="PRK02553.1"/>
    <property type="match status" value="1"/>
</dbReference>
<dbReference type="PANTHER" id="PTHR35325">
    <property type="match status" value="1"/>
</dbReference>
<dbReference type="PANTHER" id="PTHR35325:SF1">
    <property type="entry name" value="PHOTOSYSTEM II REACTION CENTER PROTEIN K"/>
    <property type="match status" value="1"/>
</dbReference>
<dbReference type="Pfam" id="PF02533">
    <property type="entry name" value="PsbK"/>
    <property type="match status" value="1"/>
</dbReference>
<dbReference type="SUPFAM" id="SSF161037">
    <property type="entry name" value="Photosystem II reaction center protein K, PsbK"/>
    <property type="match status" value="1"/>
</dbReference>
<feature type="propeptide" id="PRO_0000029445" evidence="1 3">
    <location>
        <begin position="1"/>
        <end position="9"/>
    </location>
</feature>
<feature type="chain" id="PRO_0000029446" description="Photosystem II reaction center protein K" evidence="1">
    <location>
        <begin position="10"/>
        <end position="46"/>
    </location>
</feature>
<feature type="transmembrane region" description="Helical" evidence="1">
    <location>
        <begin position="18"/>
        <end position="38"/>
    </location>
</feature>
<feature type="helix" evidence="6">
    <location>
        <begin position="13"/>
        <end position="18"/>
    </location>
</feature>
<feature type="helix" evidence="6">
    <location>
        <begin position="19"/>
        <end position="22"/>
    </location>
</feature>
<feature type="helix" evidence="6">
    <location>
        <begin position="23"/>
        <end position="27"/>
    </location>
</feature>
<feature type="helix" evidence="6">
    <location>
        <begin position="28"/>
        <end position="41"/>
    </location>
</feature>
<feature type="turn" evidence="6">
    <location>
        <begin position="42"/>
        <end position="45"/>
    </location>
</feature>
<evidence type="ECO:0000255" key="1">
    <source>
        <dbReference type="HAMAP-Rule" id="MF_00441"/>
    </source>
</evidence>
<evidence type="ECO:0000269" key="2">
    <source>
    </source>
</evidence>
<evidence type="ECO:0000269" key="3">
    <source>
    </source>
</evidence>
<evidence type="ECO:0000269" key="4">
    <source>
    </source>
</evidence>
<evidence type="ECO:0000305" key="5">
    <source>
    </source>
</evidence>
<evidence type="ECO:0007829" key="6">
    <source>
        <dbReference type="PDB" id="8KDE"/>
    </source>
</evidence>
<accession>P18263</accession>
<accession>B7U1E7</accession>
<accession>Q8HUH4</accession>
<keyword id="KW-0002">3D-structure</keyword>
<keyword id="KW-0150">Chloroplast</keyword>
<keyword id="KW-0903">Direct protein sequencing</keyword>
<keyword id="KW-0472">Membrane</keyword>
<keyword id="KW-0602">Photosynthesis</keyword>
<keyword id="KW-0604">Photosystem II</keyword>
<keyword id="KW-0934">Plastid</keyword>
<keyword id="KW-0674">Reaction center</keyword>
<keyword id="KW-1185">Reference proteome</keyword>
<keyword id="KW-0793">Thylakoid</keyword>
<keyword id="KW-0812">Transmembrane</keyword>
<keyword id="KW-1133">Transmembrane helix</keyword>
<name>PSBK_CHLRE</name>
<protein>
    <recommendedName>
        <fullName evidence="1">Photosystem II reaction center protein K</fullName>
        <shortName evidence="1">PSII-K</shortName>
    </recommendedName>
</protein>
<proteinExistence type="evidence at protein level"/>
<geneLocation type="chloroplast"/>
<reference key="1">
    <citation type="journal article" date="1990" name="Nucleic Acids Res.">
        <title>Nucleotide sequence of the chloroplast gene for the 4 kD K polypeptide of photosystem II (psbK) and the psbK-tufA intergenic region of Chlamydomonas reinhardtii.</title>
        <authorList>
            <person name="Silk G.W."/>
            <person name="de la Cruz F."/>
            <person name="Wu M."/>
        </authorList>
    </citation>
    <scope>NUCLEOTIDE SEQUENCE [GENOMIC DNA]</scope>
    <source>
        <strain>137c / CC-125</strain>
    </source>
</reference>
<reference key="2">
    <citation type="journal article" date="2002" name="Plant Cell">
        <title>The Chlamydomonas reinhardtii plastid chromosome: islands of genes in a sea of repeats.</title>
        <authorList>
            <person name="Maul J.E."/>
            <person name="Lilly J.W."/>
            <person name="Cui L."/>
            <person name="dePamphilis C.W."/>
            <person name="Miller W."/>
            <person name="Harris E.H."/>
            <person name="Stern D.B."/>
        </authorList>
    </citation>
    <scope>NUCLEOTIDE SEQUENCE [LARGE SCALE GENOMIC DNA]</scope>
    <scope>IDENTIFICATION</scope>
    <scope>COMPLETE PLASTID GENOME</scope>
</reference>
<reference key="3">
    <citation type="journal article" date="2009" name="BMC Evol. Biol.">
        <title>Nucleotide diversity of the Chlamydomonas reinhardtii plastid genome: addressing the mutational-hazard hypothesis.</title>
        <authorList>
            <person name="Smith D.R."/>
            <person name="Lee R.W."/>
        </authorList>
    </citation>
    <scope>NUCLEOTIDE SEQUENCE [LARGE SCALE GENOMIC DNA]</scope>
    <source>
        <strain>CC-503</strain>
    </source>
</reference>
<reference key="4">
    <citation type="journal article" date="1991" name="J. Biol. Chem.">
        <title>Photosystem II particles from Chlamydomonas reinhardtii. Purification, molecular weight, small subunit composition, and protein phosphorylation.</title>
        <authorList>
            <person name="de Vitry C."/>
            <person name="Diner B.A."/>
            <person name="Popo J.-L."/>
        </authorList>
    </citation>
    <scope>PROTEIN SEQUENCE OF 10-27</scope>
    <scope>SUBUNIT</scope>
    <scope>SUBCELLULAR LOCATION</scope>
</reference>
<reference key="5">
    <citation type="journal article" date="1994" name="Plant Mol. Biol.">
        <title>Directed disruption of the Chlamydomonas chloroplast psbK gene destabilizes the photosystem II reaction center complex.</title>
        <authorList>
            <person name="Takahashi Y."/>
            <person name="Matsumoto H."/>
            <person name="Goldschmidt-Clermont M."/>
            <person name="Rochaix J.D."/>
        </authorList>
    </citation>
    <scope>FUNCTION</scope>
    <scope>DISRUPTION PHENOTYPE</scope>
</reference>
<reference key="6">
    <citation type="journal article" date="2003" name="J. Biol. Chem.">
        <title>Evidence that the PsbK polypeptide is associated with the photosystem II core antenna complex CP43.</title>
        <authorList>
            <person name="Sugimoto I."/>
            <person name="Takahashi Y."/>
        </authorList>
    </citation>
    <scope>FUNCTION</scope>
    <scope>SUBUNIT</scope>
    <scope>SUBCELLULAR LOCATION</scope>
    <source>
        <strain>137c / CC-125</strain>
    </source>
</reference>
<gene>
    <name evidence="1" type="primary">psbK</name>
</gene>